<accession>Q8N8U9</accession>
<accession>A8K1P8</accession>
<accession>Q8TF36</accession>
<gene>
    <name type="primary">BMPER</name>
    <name type="synonym">KIAA1965</name>
</gene>
<organism>
    <name type="scientific">Homo sapiens</name>
    <name type="common">Human</name>
    <dbReference type="NCBI Taxonomy" id="9606"/>
    <lineage>
        <taxon>Eukaryota</taxon>
        <taxon>Metazoa</taxon>
        <taxon>Chordata</taxon>
        <taxon>Craniata</taxon>
        <taxon>Vertebrata</taxon>
        <taxon>Euteleostomi</taxon>
        <taxon>Mammalia</taxon>
        <taxon>Eutheria</taxon>
        <taxon>Euarchontoglires</taxon>
        <taxon>Primates</taxon>
        <taxon>Haplorrhini</taxon>
        <taxon>Catarrhini</taxon>
        <taxon>Hominidae</taxon>
        <taxon>Homo</taxon>
    </lineage>
</organism>
<keyword id="KW-0225">Disease variant</keyword>
<keyword id="KW-1015">Disulfide bond</keyword>
<keyword id="KW-0325">Glycoprotein</keyword>
<keyword id="KW-1267">Proteomics identification</keyword>
<keyword id="KW-1185">Reference proteome</keyword>
<keyword id="KW-0677">Repeat</keyword>
<keyword id="KW-0964">Secreted</keyword>
<keyword id="KW-0732">Signal</keyword>
<reference key="1">
    <citation type="journal article" date="2004" name="Biochem. Biophys. Res. Commun.">
        <title>Human Crossveinless-2 is a novel inhibitor of bone morphogenetic proteins.</title>
        <authorList>
            <person name="Binnerts M.E."/>
            <person name="Wen X."/>
            <person name="Cante-Barrett K."/>
            <person name="Bright J."/>
            <person name="Chen H.-T."/>
            <person name="Asundi V."/>
            <person name="Sattari P."/>
            <person name="Tang T."/>
            <person name="Boyle B."/>
            <person name="Funk W."/>
            <person name="Rupp F."/>
        </authorList>
    </citation>
    <scope>NUCLEOTIDE SEQUENCE [MRNA]</scope>
    <scope>FUNCTION</scope>
    <scope>SUBCELLULAR LOCATION</scope>
    <scope>TISSUE SPECIFICITY</scope>
</reference>
<reference key="2">
    <citation type="journal article" date="2004" name="Nat. Genet.">
        <title>Complete sequencing and characterization of 21,243 full-length human cDNAs.</title>
        <authorList>
            <person name="Ota T."/>
            <person name="Suzuki Y."/>
            <person name="Nishikawa T."/>
            <person name="Otsuki T."/>
            <person name="Sugiyama T."/>
            <person name="Irie R."/>
            <person name="Wakamatsu A."/>
            <person name="Hayashi K."/>
            <person name="Sato H."/>
            <person name="Nagai K."/>
            <person name="Kimura K."/>
            <person name="Makita H."/>
            <person name="Sekine M."/>
            <person name="Obayashi M."/>
            <person name="Nishi T."/>
            <person name="Shibahara T."/>
            <person name="Tanaka T."/>
            <person name="Ishii S."/>
            <person name="Yamamoto J."/>
            <person name="Saito K."/>
            <person name="Kawai Y."/>
            <person name="Isono Y."/>
            <person name="Nakamura Y."/>
            <person name="Nagahari K."/>
            <person name="Murakami K."/>
            <person name="Yasuda T."/>
            <person name="Iwayanagi T."/>
            <person name="Wagatsuma M."/>
            <person name="Shiratori A."/>
            <person name="Sudo H."/>
            <person name="Hosoiri T."/>
            <person name="Kaku Y."/>
            <person name="Kodaira H."/>
            <person name="Kondo H."/>
            <person name="Sugawara M."/>
            <person name="Takahashi M."/>
            <person name="Kanda K."/>
            <person name="Yokoi T."/>
            <person name="Furuya T."/>
            <person name="Kikkawa E."/>
            <person name="Omura Y."/>
            <person name="Abe K."/>
            <person name="Kamihara K."/>
            <person name="Katsuta N."/>
            <person name="Sato K."/>
            <person name="Tanikawa M."/>
            <person name="Yamazaki M."/>
            <person name="Ninomiya K."/>
            <person name="Ishibashi T."/>
            <person name="Yamashita H."/>
            <person name="Murakawa K."/>
            <person name="Fujimori K."/>
            <person name="Tanai H."/>
            <person name="Kimata M."/>
            <person name="Watanabe M."/>
            <person name="Hiraoka S."/>
            <person name="Chiba Y."/>
            <person name="Ishida S."/>
            <person name="Ono Y."/>
            <person name="Takiguchi S."/>
            <person name="Watanabe S."/>
            <person name="Yosida M."/>
            <person name="Hotuta T."/>
            <person name="Kusano J."/>
            <person name="Kanehori K."/>
            <person name="Takahashi-Fujii A."/>
            <person name="Hara H."/>
            <person name="Tanase T.-O."/>
            <person name="Nomura Y."/>
            <person name="Togiya S."/>
            <person name="Komai F."/>
            <person name="Hara R."/>
            <person name="Takeuchi K."/>
            <person name="Arita M."/>
            <person name="Imose N."/>
            <person name="Musashino K."/>
            <person name="Yuuki H."/>
            <person name="Oshima A."/>
            <person name="Sasaki N."/>
            <person name="Aotsuka S."/>
            <person name="Yoshikawa Y."/>
            <person name="Matsunawa H."/>
            <person name="Ichihara T."/>
            <person name="Shiohata N."/>
            <person name="Sano S."/>
            <person name="Moriya S."/>
            <person name="Momiyama H."/>
            <person name="Satoh N."/>
            <person name="Takami S."/>
            <person name="Terashima Y."/>
            <person name="Suzuki O."/>
            <person name="Nakagawa S."/>
            <person name="Senoh A."/>
            <person name="Mizoguchi H."/>
            <person name="Goto Y."/>
            <person name="Shimizu F."/>
            <person name="Wakebe H."/>
            <person name="Hishigaki H."/>
            <person name="Watanabe T."/>
            <person name="Sugiyama A."/>
            <person name="Takemoto M."/>
            <person name="Kawakami B."/>
            <person name="Yamazaki M."/>
            <person name="Watanabe K."/>
            <person name="Kumagai A."/>
            <person name="Itakura S."/>
            <person name="Fukuzumi Y."/>
            <person name="Fujimori Y."/>
            <person name="Komiyama M."/>
            <person name="Tashiro H."/>
            <person name="Tanigami A."/>
            <person name="Fujiwara T."/>
            <person name="Ono T."/>
            <person name="Yamada K."/>
            <person name="Fujii Y."/>
            <person name="Ozaki K."/>
            <person name="Hirao M."/>
            <person name="Ohmori Y."/>
            <person name="Kawabata A."/>
            <person name="Hikiji T."/>
            <person name="Kobatake N."/>
            <person name="Inagaki H."/>
            <person name="Ikema Y."/>
            <person name="Okamoto S."/>
            <person name="Okitani R."/>
            <person name="Kawakami T."/>
            <person name="Noguchi S."/>
            <person name="Itoh T."/>
            <person name="Shigeta K."/>
            <person name="Senba T."/>
            <person name="Matsumura K."/>
            <person name="Nakajima Y."/>
            <person name="Mizuno T."/>
            <person name="Morinaga M."/>
            <person name="Sasaki M."/>
            <person name="Togashi T."/>
            <person name="Oyama M."/>
            <person name="Hata H."/>
            <person name="Watanabe M."/>
            <person name="Komatsu T."/>
            <person name="Mizushima-Sugano J."/>
            <person name="Satoh T."/>
            <person name="Shirai Y."/>
            <person name="Takahashi Y."/>
            <person name="Nakagawa K."/>
            <person name="Okumura K."/>
            <person name="Nagase T."/>
            <person name="Nomura N."/>
            <person name="Kikuchi H."/>
            <person name="Masuho Y."/>
            <person name="Yamashita R."/>
            <person name="Nakai K."/>
            <person name="Yada T."/>
            <person name="Nakamura Y."/>
            <person name="Ohara O."/>
            <person name="Isogai T."/>
            <person name="Sugano S."/>
        </authorList>
    </citation>
    <scope>NUCLEOTIDE SEQUENCE [LARGE SCALE MRNA]</scope>
    <source>
        <tissue>Hippocampus</tissue>
    </source>
</reference>
<reference key="3">
    <citation type="journal article" date="2004" name="Genome Res.">
        <title>The status, quality, and expansion of the NIH full-length cDNA project: the Mammalian Gene Collection (MGC).</title>
        <authorList>
            <consortium name="The MGC Project Team"/>
        </authorList>
    </citation>
    <scope>NUCLEOTIDE SEQUENCE [LARGE SCALE MRNA]</scope>
    <source>
        <tissue>Placenta</tissue>
    </source>
</reference>
<reference key="4">
    <citation type="journal article" date="2001" name="DNA Res.">
        <title>Prediction of the coding sequences of unidentified human genes. XXII. The complete sequences of 50 new cDNA clones which code for large proteins.</title>
        <authorList>
            <person name="Nagase T."/>
            <person name="Kikuno R."/>
            <person name="Ohara O."/>
        </authorList>
    </citation>
    <scope>NUCLEOTIDE SEQUENCE [LARGE SCALE MRNA] OF 121-685</scope>
    <source>
        <tissue>Brain</tissue>
    </source>
</reference>
<reference key="5">
    <citation type="journal article" date="2010" name="Am. J. Hum. Genet.">
        <title>BMPER mutation in diaphanospondylodysostosis identified by ancestral autozygosity mapping and targeted high-throughput sequencing.</title>
        <authorList>
            <person name="Funari V.A."/>
            <person name="Krakow D."/>
            <person name="Nevarez L."/>
            <person name="Chen Z."/>
            <person name="Funari T.L."/>
            <person name="Vatanavicharn N."/>
            <person name="Wilcox W.R."/>
            <person name="Rimoin D.L."/>
            <person name="Nelson S.F."/>
            <person name="Cohn D.H."/>
        </authorList>
    </citation>
    <scope>VARIANT DSD LEU-370</scope>
</reference>
<comment type="function">
    <text evidence="5">Inhibitor of bone morphogenetic protein (BMP) function, it may regulate BMP responsiveness of osteoblasts and chondrocytes.</text>
</comment>
<comment type="subunit">
    <text evidence="1">Interacts with BMP4.</text>
</comment>
<comment type="subcellular location">
    <subcellularLocation>
        <location evidence="5">Secreted</location>
    </subcellularLocation>
</comment>
<comment type="tissue specificity">
    <text evidence="5">Highly expressed in lung, and brain and also in primary chondrocytes.</text>
</comment>
<comment type="disease" evidence="6">
    <disease id="DI-03157">
        <name>Diaphanospondylodysostosis</name>
        <acronym>DSD</acronym>
        <description>A rare, recessively inherited, perinatal lethal skeletal disorder. The primary skeletal characteristics of the phenotype include a small chest, abnormal vertebral segmentation, and posterior rib gaps containing incompletely differentiated mesenchymal tissue. Consistent craniofacial features include ocular hypertelorism, epicanthal folds, a depressed nasal bridge with a short nose, and low-set ears. The most commonly described extraskeletal finding is nephroblastomatosis with cystic kidneys, but other visceral findings have been described in some cases.</description>
        <dbReference type="MIM" id="608022"/>
    </disease>
    <text>The disease is caused by variants affecting the gene represented in this entry.</text>
</comment>
<evidence type="ECO:0000250" key="1"/>
<evidence type="ECO:0000255" key="2"/>
<evidence type="ECO:0000255" key="3">
    <source>
        <dbReference type="PROSITE-ProRule" id="PRU00220"/>
    </source>
</evidence>
<evidence type="ECO:0000255" key="4">
    <source>
        <dbReference type="PROSITE-ProRule" id="PRU00580"/>
    </source>
</evidence>
<evidence type="ECO:0000269" key="5">
    <source>
    </source>
</evidence>
<evidence type="ECO:0000269" key="6">
    <source>
    </source>
</evidence>
<evidence type="ECO:0000305" key="7"/>
<sequence>MLWFSGVGALAERYCRRSPGITCCVLLLLNCSGVPMSLASSFLTGSVAKCENEGEVLQIPFITDNPCIMCVCLNKEVTCKREKCPVLSRDCALAIKQRGACCEQCKGCTYEGNTYNSSFKWQSPAEPCVLRQCQEGVVTESGVRCVVHCKNPLEHLGMCCPTCPGCVFEGVQYQEGEEFQPEGSKCTKCSCTGGRTQCVREVCPILSCPQHLSHIPPGQCCPKCLGQRKVFDLPFGSCLFRSDVYDNGSSFLYDNCTACTCRDSTVVCKRKCSHPGGCDQGQEGCCEECLLRVPPEDIKVCKFGNKIFQDGEMWSSINCTICACVKGRTECRNKQCIPISSCPQGKILNRKGCCPICTEKPGVCTVFGDPHYNTFDGRTFNFQGTCQYVLTKDCSSPASPFQVLVKNDARRTRSFSWTKSVELVLGESRVSLQQHLTVRWNGSRIALPCRAPHFHIDLDGYLLKVTTKAGLEISWDGDSFVEVMAAPHLKGKLCGLCGNYNGHKRDDLIGGDGNFKFDVDDFAESWRVESNEFCNRPQRKPVPELCQGTVKVKLRAHRECQKLKSWEFQTCHSTVDYATFYRSCVTDMCECPVHKNCYCESFLAYTRACQREGIKVHWEPQQNCAATQCKHGAVYDTCGPGCIKTCDNWNEIGPCNKPCVAGCHCPANLVLHKGRCIKPVLCPQR</sequence>
<feature type="signal peptide" evidence="2">
    <location>
        <begin position="1"/>
        <end position="39"/>
    </location>
</feature>
<feature type="chain" id="PRO_0000020820" description="BMP-binding endothelial regulator protein">
    <location>
        <begin position="40"/>
        <end position="685"/>
    </location>
</feature>
<feature type="domain" description="VWFC 1" evidence="3">
    <location>
        <begin position="50"/>
        <end position="105"/>
    </location>
</feature>
<feature type="domain" description="VWFC 2" evidence="3">
    <location>
        <begin position="108"/>
        <end position="163"/>
    </location>
</feature>
<feature type="domain" description="VWFC 3" evidence="3">
    <location>
        <begin position="164"/>
        <end position="225"/>
    </location>
</feature>
<feature type="domain" description="VWFC 4" evidence="3">
    <location>
        <begin position="238"/>
        <end position="289"/>
    </location>
</feature>
<feature type="domain" description="VWFC 5" evidence="3">
    <location>
        <begin position="299"/>
        <end position="358"/>
    </location>
</feature>
<feature type="domain" description="VWFD" evidence="4">
    <location>
        <begin position="362"/>
        <end position="535"/>
    </location>
</feature>
<feature type="domain" description="TIL">
    <location>
        <begin position="629"/>
        <end position="682"/>
    </location>
</feature>
<feature type="glycosylation site" description="N-linked (GlcNAc...) asparagine" evidence="2">
    <location>
        <position position="116"/>
    </location>
</feature>
<feature type="glycosylation site" description="N-linked (GlcNAc...) asparagine" evidence="2">
    <location>
        <position position="247"/>
    </location>
</feature>
<feature type="glycosylation site" description="N-linked (GlcNAc...) asparagine" evidence="2">
    <location>
        <position position="255"/>
    </location>
</feature>
<feature type="glycosylation site" description="N-linked (GlcNAc...) asparagine" evidence="2">
    <location>
        <position position="318"/>
    </location>
</feature>
<feature type="glycosylation site" description="N-linked (GlcNAc...) asparagine" evidence="2">
    <location>
        <position position="441"/>
    </location>
</feature>
<feature type="disulfide bond" evidence="4">
    <location>
        <begin position="364"/>
        <end position="497"/>
    </location>
</feature>
<feature type="disulfide bond" evidence="4">
    <location>
        <begin position="386"/>
        <end position="534"/>
    </location>
</feature>
<feature type="sequence variant" id="VAR_065823" description="In DSD; dbSNP:rs387906993." evidence="6">
    <original>P</original>
    <variation>L</variation>
    <location>
        <position position="370"/>
    </location>
</feature>
<feature type="sequence variant" id="VAR_028166" description="In dbSNP:rs10249320.">
    <original>R</original>
    <variation>W</variation>
    <location>
        <position position="555"/>
    </location>
</feature>
<feature type="sequence conflict" description="In Ref. 2; BAC04712 and 3; AAH60868." evidence="7" ref="2 3">
    <original>C</original>
    <variation>R</variation>
    <location>
        <position position="79"/>
    </location>
</feature>
<name>BMPER_HUMAN</name>
<protein>
    <recommendedName>
        <fullName>BMP-binding endothelial regulator protein</fullName>
    </recommendedName>
    <alternativeName>
        <fullName>Bone morphogenetic protein-binding endothelial cell precursor-derived regulator</fullName>
    </alternativeName>
    <alternativeName>
        <fullName>Protein crossveinless-2</fullName>
        <shortName>hCV2</shortName>
    </alternativeName>
</protein>
<dbReference type="EMBL" id="AY324650">
    <property type="protein sequence ID" value="AAP89012.1"/>
    <property type="molecule type" value="mRNA"/>
</dbReference>
<dbReference type="EMBL" id="AK096150">
    <property type="protein sequence ID" value="BAC04712.1"/>
    <property type="molecule type" value="mRNA"/>
</dbReference>
<dbReference type="EMBL" id="AK289963">
    <property type="protein sequence ID" value="BAF82652.1"/>
    <property type="molecule type" value="mRNA"/>
</dbReference>
<dbReference type="EMBL" id="BC060868">
    <property type="protein sequence ID" value="AAH60868.1"/>
    <property type="molecule type" value="mRNA"/>
</dbReference>
<dbReference type="EMBL" id="AB075845">
    <property type="protein sequence ID" value="BAB85551.1"/>
    <property type="molecule type" value="mRNA"/>
</dbReference>
<dbReference type="CCDS" id="CCDS5442.1"/>
<dbReference type="RefSeq" id="NP_001352237.1">
    <property type="nucleotide sequence ID" value="NM_001365308.1"/>
</dbReference>
<dbReference type="RefSeq" id="NP_597725.1">
    <property type="nucleotide sequence ID" value="NM_133468.5"/>
</dbReference>
<dbReference type="SMR" id="Q8N8U9"/>
<dbReference type="BioGRID" id="127971">
    <property type="interactions" value="2"/>
</dbReference>
<dbReference type="DIP" id="DIP-47327N"/>
<dbReference type="FunCoup" id="Q8N8U9">
    <property type="interactions" value="181"/>
</dbReference>
<dbReference type="IntAct" id="Q8N8U9">
    <property type="interactions" value="3"/>
</dbReference>
<dbReference type="MINT" id="Q8N8U9"/>
<dbReference type="STRING" id="9606.ENSP00000497748"/>
<dbReference type="GlyCosmos" id="Q8N8U9">
    <property type="glycosylation" value="5 sites, No reported glycans"/>
</dbReference>
<dbReference type="GlyGen" id="Q8N8U9">
    <property type="glycosylation" value="5 sites, 1 N-linked glycan (1 site)"/>
</dbReference>
<dbReference type="iPTMnet" id="Q8N8U9"/>
<dbReference type="PhosphoSitePlus" id="Q8N8U9"/>
<dbReference type="BioMuta" id="BMPER"/>
<dbReference type="DMDM" id="116241270"/>
<dbReference type="jPOST" id="Q8N8U9"/>
<dbReference type="MassIVE" id="Q8N8U9"/>
<dbReference type="PaxDb" id="9606-ENSP00000297161"/>
<dbReference type="PeptideAtlas" id="Q8N8U9"/>
<dbReference type="ProteomicsDB" id="72462"/>
<dbReference type="Antibodypedia" id="12854">
    <property type="antibodies" value="169 antibodies from 23 providers"/>
</dbReference>
<dbReference type="DNASU" id="168667"/>
<dbReference type="Ensembl" id="ENST00000297161.6">
    <property type="protein sequence ID" value="ENSP00000297161.2"/>
    <property type="gene ID" value="ENSG00000164619.10"/>
</dbReference>
<dbReference type="Ensembl" id="ENST00000649409.2">
    <property type="protein sequence ID" value="ENSP00000497748.1"/>
    <property type="gene ID" value="ENSG00000164619.10"/>
</dbReference>
<dbReference type="GeneID" id="168667"/>
<dbReference type="KEGG" id="hsa:168667"/>
<dbReference type="MANE-Select" id="ENST00000649409.2">
    <property type="protein sequence ID" value="ENSP00000497748.1"/>
    <property type="RefSeq nucleotide sequence ID" value="NM_001365308.1"/>
    <property type="RefSeq protein sequence ID" value="NP_001352237.1"/>
</dbReference>
<dbReference type="UCSC" id="uc011kap.2">
    <property type="organism name" value="human"/>
</dbReference>
<dbReference type="AGR" id="HGNC:24154"/>
<dbReference type="CTD" id="168667"/>
<dbReference type="DisGeNET" id="168667"/>
<dbReference type="GeneCards" id="BMPER"/>
<dbReference type="HGNC" id="HGNC:24154">
    <property type="gene designation" value="BMPER"/>
</dbReference>
<dbReference type="HPA" id="ENSG00000164619">
    <property type="expression patterns" value="Low tissue specificity"/>
</dbReference>
<dbReference type="MalaCards" id="BMPER"/>
<dbReference type="MIM" id="608022">
    <property type="type" value="phenotype"/>
</dbReference>
<dbReference type="MIM" id="608699">
    <property type="type" value="gene"/>
</dbReference>
<dbReference type="neXtProt" id="NX_Q8N8U9"/>
<dbReference type="OpenTargets" id="ENSG00000164619"/>
<dbReference type="Orphanet" id="66637">
    <property type="disease" value="Diaphanospondylodysostosis"/>
</dbReference>
<dbReference type="PharmGKB" id="PA142672557"/>
<dbReference type="VEuPathDB" id="HostDB:ENSG00000164619"/>
<dbReference type="eggNOG" id="KOG1216">
    <property type="taxonomic scope" value="Eukaryota"/>
</dbReference>
<dbReference type="GeneTree" id="ENSGT00940000156485"/>
<dbReference type="HOGENOM" id="CLU_018024_2_0_1"/>
<dbReference type="InParanoid" id="Q8N8U9"/>
<dbReference type="OMA" id="WHFANSW"/>
<dbReference type="OrthoDB" id="6019304at2759"/>
<dbReference type="PAN-GO" id="Q8N8U9">
    <property type="GO annotations" value="4 GO annotations based on evolutionary models"/>
</dbReference>
<dbReference type="PhylomeDB" id="Q8N8U9"/>
<dbReference type="TreeFam" id="TF343473"/>
<dbReference type="PathwayCommons" id="Q8N8U9"/>
<dbReference type="SignaLink" id="Q8N8U9"/>
<dbReference type="BioGRID-ORCS" id="168667">
    <property type="hits" value="7 hits in 1138 CRISPR screens"/>
</dbReference>
<dbReference type="ChiTaRS" id="BMPER">
    <property type="organism name" value="human"/>
</dbReference>
<dbReference type="GeneWiki" id="BMPER"/>
<dbReference type="GenomeRNAi" id="168667"/>
<dbReference type="Pharos" id="Q8N8U9">
    <property type="development level" value="Tbio"/>
</dbReference>
<dbReference type="PRO" id="PR:Q8N8U9"/>
<dbReference type="Proteomes" id="UP000005640">
    <property type="component" value="Chromosome 7"/>
</dbReference>
<dbReference type="RNAct" id="Q8N8U9">
    <property type="molecule type" value="protein"/>
</dbReference>
<dbReference type="Bgee" id="ENSG00000164619">
    <property type="expression patterns" value="Expressed in upper lobe of left lung and 105 other cell types or tissues"/>
</dbReference>
<dbReference type="ExpressionAtlas" id="Q8N8U9">
    <property type="expression patterns" value="baseline and differential"/>
</dbReference>
<dbReference type="GO" id="GO:0031012">
    <property type="term" value="C:extracellular matrix"/>
    <property type="evidence" value="ECO:0000318"/>
    <property type="project" value="GO_Central"/>
</dbReference>
<dbReference type="GO" id="GO:0005615">
    <property type="term" value="C:extracellular space"/>
    <property type="evidence" value="ECO:0000314"/>
    <property type="project" value="BHF-UCL"/>
</dbReference>
<dbReference type="GO" id="GO:0001568">
    <property type="term" value="P:blood vessel development"/>
    <property type="evidence" value="ECO:0000318"/>
    <property type="project" value="GO_Central"/>
</dbReference>
<dbReference type="GO" id="GO:0002043">
    <property type="term" value="P:blood vessel endothelial cell proliferation involved in sprouting angiogenesis"/>
    <property type="evidence" value="ECO:0000314"/>
    <property type="project" value="BHF-UCL"/>
</dbReference>
<dbReference type="GO" id="GO:0030509">
    <property type="term" value="P:BMP signaling pathway"/>
    <property type="evidence" value="ECO:0007669"/>
    <property type="project" value="Ensembl"/>
</dbReference>
<dbReference type="GO" id="GO:0042118">
    <property type="term" value="P:endothelial cell activation"/>
    <property type="evidence" value="ECO:0000314"/>
    <property type="project" value="BHF-UCL"/>
</dbReference>
<dbReference type="GO" id="GO:0048839">
    <property type="term" value="P:inner ear development"/>
    <property type="evidence" value="ECO:0007669"/>
    <property type="project" value="Ensembl"/>
</dbReference>
<dbReference type="GO" id="GO:0030514">
    <property type="term" value="P:negative regulation of BMP signaling pathway"/>
    <property type="evidence" value="ECO:0007669"/>
    <property type="project" value="Ensembl"/>
</dbReference>
<dbReference type="GO" id="GO:0070374">
    <property type="term" value="P:positive regulation of ERK1 and ERK2 cascade"/>
    <property type="evidence" value="ECO:0000314"/>
    <property type="project" value="BHF-UCL"/>
</dbReference>
<dbReference type="GO" id="GO:0060391">
    <property type="term" value="P:positive regulation of SMAD protein signal transduction"/>
    <property type="evidence" value="ECO:0000314"/>
    <property type="project" value="BHF-UCL"/>
</dbReference>
<dbReference type="GO" id="GO:1903672">
    <property type="term" value="P:positive regulation of sprouting angiogenesis"/>
    <property type="evidence" value="ECO:0000316"/>
    <property type="project" value="BHF-UCL"/>
</dbReference>
<dbReference type="GO" id="GO:0045765">
    <property type="term" value="P:regulation of angiogenesis"/>
    <property type="evidence" value="ECO:0000318"/>
    <property type="project" value="GO_Central"/>
</dbReference>
<dbReference type="GO" id="GO:0010594">
    <property type="term" value="P:regulation of endothelial cell migration"/>
    <property type="evidence" value="ECO:0000314"/>
    <property type="project" value="BHF-UCL"/>
</dbReference>
<dbReference type="GO" id="GO:0032880">
    <property type="term" value="P:regulation of protein localization"/>
    <property type="evidence" value="ECO:0007669"/>
    <property type="project" value="Ensembl"/>
</dbReference>
<dbReference type="GO" id="GO:0060395">
    <property type="term" value="P:SMAD protein signal transduction"/>
    <property type="evidence" value="ECO:0007669"/>
    <property type="project" value="Ensembl"/>
</dbReference>
<dbReference type="GO" id="GO:0001657">
    <property type="term" value="P:ureteric bud development"/>
    <property type="evidence" value="ECO:0007669"/>
    <property type="project" value="Ensembl"/>
</dbReference>
<dbReference type="CDD" id="cd19941">
    <property type="entry name" value="TIL"/>
    <property type="match status" value="1"/>
</dbReference>
<dbReference type="FunFam" id="2.10.70.10:FF:000034">
    <property type="entry name" value="BMP-binding endothelial regulator protein"/>
    <property type="match status" value="1"/>
</dbReference>
<dbReference type="FunFam" id="2.10.25.10:FF:000236">
    <property type="entry name" value="BMP-binding endothelial regulator protein-like"/>
    <property type="match status" value="1"/>
</dbReference>
<dbReference type="FunFam" id="2.10.70.10:FF:000037">
    <property type="entry name" value="BMP-binding endothelial regulator protein-like"/>
    <property type="match status" value="1"/>
</dbReference>
<dbReference type="Gene3D" id="6.20.200.20">
    <property type="match status" value="3"/>
</dbReference>
<dbReference type="Gene3D" id="2.10.70.10">
    <property type="entry name" value="Complement Module, domain 1"/>
    <property type="match status" value="2"/>
</dbReference>
<dbReference type="Gene3D" id="2.10.25.10">
    <property type="entry name" value="Laminin"/>
    <property type="match status" value="1"/>
</dbReference>
<dbReference type="InterPro" id="IPR052424">
    <property type="entry name" value="Kielin_Chordin-BMP_Reg"/>
</dbReference>
<dbReference type="InterPro" id="IPR036084">
    <property type="entry name" value="Ser_inhib-like_sf"/>
</dbReference>
<dbReference type="InterPro" id="IPR002919">
    <property type="entry name" value="TIL_dom"/>
</dbReference>
<dbReference type="InterPro" id="IPR014853">
    <property type="entry name" value="VWF/SSPO/ZAN-like_Cys-rich_dom"/>
</dbReference>
<dbReference type="InterPro" id="IPR001007">
    <property type="entry name" value="VWF_dom"/>
</dbReference>
<dbReference type="InterPro" id="IPR001846">
    <property type="entry name" value="VWF_type-D"/>
</dbReference>
<dbReference type="PANTHER" id="PTHR46698">
    <property type="entry name" value="CROSSVEINLESS 2"/>
    <property type="match status" value="1"/>
</dbReference>
<dbReference type="PANTHER" id="PTHR46698:SF4">
    <property type="entry name" value="CROSSVEINLESS 2"/>
    <property type="match status" value="1"/>
</dbReference>
<dbReference type="Pfam" id="PF08742">
    <property type="entry name" value="C8"/>
    <property type="match status" value="1"/>
</dbReference>
<dbReference type="Pfam" id="PF01826">
    <property type="entry name" value="TIL"/>
    <property type="match status" value="1"/>
</dbReference>
<dbReference type="Pfam" id="PF00093">
    <property type="entry name" value="VWC"/>
    <property type="match status" value="2"/>
</dbReference>
<dbReference type="Pfam" id="PF00094">
    <property type="entry name" value="VWD"/>
    <property type="match status" value="1"/>
</dbReference>
<dbReference type="SMART" id="SM00832">
    <property type="entry name" value="C8"/>
    <property type="match status" value="1"/>
</dbReference>
<dbReference type="SMART" id="SM00214">
    <property type="entry name" value="VWC"/>
    <property type="match status" value="5"/>
</dbReference>
<dbReference type="SMART" id="SM00216">
    <property type="entry name" value="VWD"/>
    <property type="match status" value="1"/>
</dbReference>
<dbReference type="SUPFAM" id="SSF57603">
    <property type="entry name" value="FnI-like domain"/>
    <property type="match status" value="5"/>
</dbReference>
<dbReference type="SUPFAM" id="SSF57567">
    <property type="entry name" value="Serine protease inhibitors"/>
    <property type="match status" value="1"/>
</dbReference>
<dbReference type="PROSITE" id="PS01208">
    <property type="entry name" value="VWFC_1"/>
    <property type="match status" value="3"/>
</dbReference>
<dbReference type="PROSITE" id="PS50184">
    <property type="entry name" value="VWFC_2"/>
    <property type="match status" value="2"/>
</dbReference>
<dbReference type="PROSITE" id="PS51233">
    <property type="entry name" value="VWFD"/>
    <property type="match status" value="1"/>
</dbReference>
<proteinExistence type="evidence at protein level"/>